<sequence>MWSTRSPNSTAWPLSLEPDPGMASASTTMHTTTIAEPDPGMSGWPDGRMETSTPTIMDIVVIAGVIAAVAIVLVSLLFVMLRYMYRHKGTYHTNEAKGTEFAESADAALQGDPALQDAGDSSRKEYFI</sequence>
<proteinExistence type="evidence at protein level"/>
<dbReference type="EMBL" id="M11802">
    <property type="protein sequence ID" value="AAA60023.1"/>
    <property type="molecule type" value="mRNA"/>
</dbReference>
<dbReference type="EMBL" id="M36284">
    <property type="protein sequence ID" value="AAA52625.1"/>
    <property type="molecule type" value="mRNA"/>
</dbReference>
<dbReference type="EMBL" id="X12496">
    <property type="protein sequence ID" value="CAA31016.1"/>
    <property type="molecule type" value="mRNA"/>
</dbReference>
<dbReference type="EMBL" id="M28335">
    <property type="protein sequence ID" value="AAA52574.1"/>
    <property type="molecule type" value="mRNA"/>
</dbReference>
<dbReference type="EMBL" id="X51973">
    <property type="protein sequence ID" value="CAA36235.1"/>
    <property type="molecule type" value="mRNA"/>
</dbReference>
<dbReference type="EMBL" id="AK312032">
    <property type="protein sequence ID" value="BAG34969.1"/>
    <property type="molecule type" value="mRNA"/>
</dbReference>
<dbReference type="EMBL" id="AY838876">
    <property type="protein sequence ID" value="AAV80423.1"/>
    <property type="molecule type" value="Genomic_DNA"/>
</dbReference>
<dbReference type="EMBL" id="AC013474">
    <property type="protein sequence ID" value="AAY14660.1"/>
    <property type="molecule type" value="Genomic_DNA"/>
</dbReference>
<dbReference type="EMBL" id="BC106051">
    <property type="protein sequence ID" value="AAI06052.1"/>
    <property type="molecule type" value="mRNA"/>
</dbReference>
<dbReference type="EMBL" id="BC104246">
    <property type="protein sequence ID" value="AAI04247.1"/>
    <property type="molecule type" value="mRNA"/>
</dbReference>
<dbReference type="EMBL" id="BC104247">
    <property type="protein sequence ID" value="AAI04248.1"/>
    <property type="molecule type" value="mRNA"/>
</dbReference>
<dbReference type="EMBL" id="X14242">
    <property type="protein sequence ID" value="CAA32458.1"/>
    <property type="molecule type" value="Genomic_DNA"/>
</dbReference>
<dbReference type="EMBL" id="M29662">
    <property type="protein sequence ID" value="AAA52626.1"/>
    <property type="molecule type" value="Genomic_DNA"/>
</dbReference>
<dbReference type="EMBL" id="X13890">
    <property type="protein sequence ID" value="CAA32093.1"/>
    <property type="status" value="ALT_FRAME"/>
    <property type="molecule type" value="Genomic_DNA"/>
</dbReference>
<dbReference type="EMBL" id="X13892">
    <property type="protein sequence ID" value="CAA32093.1"/>
    <property type="status" value="JOINED"/>
    <property type="molecule type" value="Genomic_DNA"/>
</dbReference>
<dbReference type="EMBL" id="X13893">
    <property type="protein sequence ID" value="CAA32093.1"/>
    <property type="status" value="JOINED"/>
    <property type="molecule type" value="Genomic_DNA"/>
</dbReference>
<dbReference type="CCDS" id="CCDS2136.1">
    <molecule id="P04921-1"/>
</dbReference>
<dbReference type="CCDS" id="CCDS46402.1">
    <molecule id="P04921-3"/>
</dbReference>
<dbReference type="CCDS" id="CCDS58724.1">
    <molecule id="P04921-2"/>
</dbReference>
<dbReference type="PIR" id="A92573">
    <property type="entry name" value="GFHUC"/>
</dbReference>
<dbReference type="RefSeq" id="NP_001243513.1">
    <molecule id="P04921-2"/>
    <property type="nucleotide sequence ID" value="NM_001256584.2"/>
</dbReference>
<dbReference type="RefSeq" id="NP_002092.1">
    <molecule id="P04921-1"/>
    <property type="nucleotide sequence ID" value="NM_002101.5"/>
</dbReference>
<dbReference type="RefSeq" id="NP_058131.1">
    <molecule id="P04921-3"/>
    <property type="nucleotide sequence ID" value="NM_016815.4"/>
</dbReference>
<dbReference type="PDB" id="2EJY">
    <property type="method" value="NMR"/>
    <property type="chains" value="B=117-126"/>
</dbReference>
<dbReference type="PDBsum" id="2EJY"/>
<dbReference type="SMR" id="P04921"/>
<dbReference type="BioGRID" id="109250">
    <property type="interactions" value="16"/>
</dbReference>
<dbReference type="ComplexPortal" id="CPX-658">
    <property type="entry name" value="Actin junctional complex"/>
</dbReference>
<dbReference type="CORUM" id="P04921"/>
<dbReference type="ELM" id="P04921"/>
<dbReference type="FunCoup" id="P04921">
    <property type="interactions" value="107"/>
</dbReference>
<dbReference type="IntAct" id="P04921">
    <property type="interactions" value="12"/>
</dbReference>
<dbReference type="MINT" id="P04921"/>
<dbReference type="STRING" id="9606.ENSP00000259254"/>
<dbReference type="GlyConnect" id="189">
    <property type="glycosylation" value="7 O-Linked glycans (1 site)"/>
</dbReference>
<dbReference type="GlyCosmos" id="P04921">
    <property type="glycosylation" value="15 sites, 14 glycans"/>
</dbReference>
<dbReference type="GlyGen" id="P04921">
    <property type="glycosylation" value="16 sites, 1 N-linked glycan (1 site), 12 O-linked glycans (5 sites)"/>
</dbReference>
<dbReference type="iPTMnet" id="P04921"/>
<dbReference type="PhosphoSitePlus" id="P04921"/>
<dbReference type="BioMuta" id="GYPC"/>
<dbReference type="DMDM" id="121407"/>
<dbReference type="jPOST" id="P04921"/>
<dbReference type="MassIVE" id="P04921"/>
<dbReference type="PaxDb" id="9606-ENSP00000259254"/>
<dbReference type="PeptideAtlas" id="P04921"/>
<dbReference type="ProteomicsDB" id="51759">
    <molecule id="P04921-1"/>
</dbReference>
<dbReference type="ProteomicsDB" id="51760">
    <molecule id="P04921-2"/>
</dbReference>
<dbReference type="Pumba" id="P04921"/>
<dbReference type="Antibodypedia" id="2455">
    <property type="antibodies" value="495 antibodies from 34 providers"/>
</dbReference>
<dbReference type="DNASU" id="2995"/>
<dbReference type="Ensembl" id="ENST00000259254.9">
    <molecule id="P04921-1"/>
    <property type="protein sequence ID" value="ENSP00000259254.4"/>
    <property type="gene ID" value="ENSG00000136732.16"/>
</dbReference>
<dbReference type="Ensembl" id="ENST00000356887.12">
    <molecule id="P04921-2"/>
    <property type="protein sequence ID" value="ENSP00000349354.7"/>
    <property type="gene ID" value="ENSG00000136732.16"/>
</dbReference>
<dbReference type="Ensembl" id="ENST00000409836.3">
    <molecule id="P04921-3"/>
    <property type="protein sequence ID" value="ENSP00000386904.3"/>
    <property type="gene ID" value="ENSG00000136732.16"/>
</dbReference>
<dbReference type="GeneID" id="2995"/>
<dbReference type="KEGG" id="hsa:2995"/>
<dbReference type="MANE-Select" id="ENST00000259254.9">
    <property type="protein sequence ID" value="ENSP00000259254.4"/>
    <property type="RefSeq nucleotide sequence ID" value="NM_002101.5"/>
    <property type="RefSeq protein sequence ID" value="NP_002092.1"/>
</dbReference>
<dbReference type="UCSC" id="uc002tnq.5">
    <molecule id="P04921-1"/>
    <property type="organism name" value="human"/>
</dbReference>
<dbReference type="AGR" id="HGNC:4704"/>
<dbReference type="CTD" id="2995"/>
<dbReference type="DisGeNET" id="2995"/>
<dbReference type="GeneCards" id="GYPC"/>
<dbReference type="HGNC" id="HGNC:4704">
    <property type="gene designation" value="GYPC"/>
</dbReference>
<dbReference type="HPA" id="ENSG00000136732">
    <property type="expression patterns" value="Tissue enhanced (bone)"/>
</dbReference>
<dbReference type="MalaCards" id="GYPC"/>
<dbReference type="MIM" id="110750">
    <property type="type" value="gene"/>
</dbReference>
<dbReference type="MIM" id="611162">
    <property type="type" value="phenotype"/>
</dbReference>
<dbReference type="MIM" id="616089">
    <property type="type" value="phenotype"/>
</dbReference>
<dbReference type="neXtProt" id="NX_P04921"/>
<dbReference type="OpenTargets" id="ENSG00000136732"/>
<dbReference type="Orphanet" id="288">
    <property type="disease" value="Hereditary elliptocytosis"/>
</dbReference>
<dbReference type="PharmGKB" id="PA29082"/>
<dbReference type="VEuPathDB" id="HostDB:ENSG00000136732"/>
<dbReference type="eggNOG" id="ENOG502S5JS">
    <property type="taxonomic scope" value="Eukaryota"/>
</dbReference>
<dbReference type="GeneTree" id="ENSGT00510000049102"/>
<dbReference type="HOGENOM" id="CLU_2183047_0_0_1"/>
<dbReference type="InParanoid" id="P04921"/>
<dbReference type="OMA" id="IMEIAII"/>
<dbReference type="OrthoDB" id="9032054at2759"/>
<dbReference type="PAN-GO" id="P04921">
    <property type="GO annotations" value="2 GO annotations based on evolutionary models"/>
</dbReference>
<dbReference type="PhylomeDB" id="P04921"/>
<dbReference type="TreeFam" id="TF337016"/>
<dbReference type="PathwayCommons" id="P04921"/>
<dbReference type="Reactome" id="R-HSA-202733">
    <property type="pathway name" value="Cell surface interactions at the vascular wall"/>
</dbReference>
<dbReference type="SignaLink" id="P04921"/>
<dbReference type="SIGNOR" id="P04921"/>
<dbReference type="BioGRID-ORCS" id="2995">
    <property type="hits" value="9 hits in 1150 CRISPR screens"/>
</dbReference>
<dbReference type="ChiTaRS" id="GYPC">
    <property type="organism name" value="human"/>
</dbReference>
<dbReference type="EvolutionaryTrace" id="P04921"/>
<dbReference type="GenomeRNAi" id="2995"/>
<dbReference type="Pharos" id="P04921">
    <property type="development level" value="Tbio"/>
</dbReference>
<dbReference type="PRO" id="PR:P04921"/>
<dbReference type="Proteomes" id="UP000005640">
    <property type="component" value="Chromosome 2"/>
</dbReference>
<dbReference type="RNAct" id="P04921">
    <property type="molecule type" value="protein"/>
</dbReference>
<dbReference type="Bgee" id="ENSG00000136732">
    <property type="expression patterns" value="Expressed in blood and 185 other cell types or tissues"/>
</dbReference>
<dbReference type="GO" id="GO:0030863">
    <property type="term" value="C:cortical cytoskeleton"/>
    <property type="evidence" value="ECO:0000314"/>
    <property type="project" value="UniProtKB"/>
</dbReference>
<dbReference type="GO" id="GO:0016020">
    <property type="term" value="C:membrane"/>
    <property type="evidence" value="ECO:0007005"/>
    <property type="project" value="UniProtKB"/>
</dbReference>
<dbReference type="GO" id="GO:0005886">
    <property type="term" value="C:plasma membrane"/>
    <property type="evidence" value="ECO:0000314"/>
    <property type="project" value="HPA"/>
</dbReference>
<dbReference type="InterPro" id="IPR001195">
    <property type="entry name" value="Glycophorin"/>
</dbReference>
<dbReference type="InterPro" id="IPR042192">
    <property type="entry name" value="Glycophorin-C"/>
</dbReference>
<dbReference type="InterPro" id="IPR003585">
    <property type="entry name" value="Neurexin-like"/>
</dbReference>
<dbReference type="PANTHER" id="PTHR47614">
    <property type="entry name" value="GLYCOPHORIN-C"/>
    <property type="match status" value="1"/>
</dbReference>
<dbReference type="PANTHER" id="PTHR47614:SF2">
    <property type="entry name" value="GLYCOPHORIN-C"/>
    <property type="match status" value="1"/>
</dbReference>
<dbReference type="PIRSF" id="PIRSF002466">
    <property type="entry name" value="Glycophorin"/>
    <property type="match status" value="1"/>
</dbReference>
<dbReference type="SMART" id="SM00294">
    <property type="entry name" value="4.1m"/>
    <property type="match status" value="1"/>
</dbReference>
<reference key="1">
    <citation type="journal article" date="1986" name="J. Biol. Chem.">
        <title>Isolation of cDNA clones and complete amino acid sequence of human erythrocyte glycophorin C.</title>
        <authorList>
            <person name="Colin Y."/>
            <person name="Rahuel C."/>
            <person name="London J."/>
            <person name="Romeo P.-H."/>
            <person name="D'Auriol L."/>
            <person name="Galibert F."/>
            <person name="Cartron J.-P."/>
        </authorList>
    </citation>
    <scope>NUCLEOTIDE SEQUENCE [MRNA] (ISOFORM GLYCOPHORIN-C)</scope>
</reference>
<reference key="2">
    <citation type="journal article" date="1987" name="Biochem. J.">
        <title>Human erythrocyte membrane sialoglycoprotein beta. The cDNA sequence suggests the absence of a cleaved N-terminal signal sequence.</title>
        <authorList>
            <person name="High S."/>
            <person name="Tanner M.J.A."/>
        </authorList>
    </citation>
    <scope>NUCLEOTIDE SEQUENCE [MRNA] (ISOFORM GLYCOPHORIN-C)</scope>
</reference>
<reference key="3">
    <citation type="journal article" date="1986" name="Rev. Fr. Transfus. Immunohematol.">
        <title>Structure of human erythrocyte glycophorin C deduced from cDNA analysis.</title>
        <authorList>
            <person name="Cartron J.-P."/>
            <person name="Colin Y."/>
            <person name="le van Kim C."/>
            <person name="Rahuel C."/>
            <person name="Blanchard D."/>
            <person name="Bloy C."/>
            <person name="London J."/>
        </authorList>
    </citation>
    <scope>NUCLEOTIDE SEQUENCE [MRNA] (ISOFORM GLYCOPHORIN-C)</scope>
</reference>
<reference key="4">
    <citation type="journal article" date="1987" name="Eur. J. Biochem.">
        <title>Gerbich blood group deficiency of the Ge:-1,-2,-3 and Ge:-1,-2,3 types. Immunochemical study and genomic analysis with cDNA probes.</title>
        <authorList>
            <person name="le van Kim C."/>
            <person name="Colin Y."/>
            <person name="Blanchard D."/>
            <person name="Dahr W."/>
            <person name="London J."/>
            <person name="Cartron J.-P."/>
        </authorList>
    </citation>
    <scope>NUCLEOTIDE SEQUENCE [MRNA] (ISOFORM GLYCOPHORIN-C)</scope>
    <source>
        <tissue>Liver</tissue>
    </source>
</reference>
<reference key="5">
    <citation type="journal article" date="1990" name="Nucleic Acids Res.">
        <title>An ubiquitous isoform of glycophorin C is produced by alternative splicing.</title>
        <authorList>
            <person name="le van Kim C."/>
            <person name="Mitjavila M.T."/>
            <person name="Clerget M."/>
            <person name="Cartron J.-P."/>
            <person name="Colin Y."/>
        </authorList>
    </citation>
    <scope>NUCLEOTIDE SEQUENCE [MRNA] (ISOFORM 3)</scope>
    <scope>TISSUE SPECIFICITY</scope>
    <source>
        <tissue>Spleen</tissue>
    </source>
</reference>
<reference key="6">
    <citation type="journal article" date="2004" name="Nat. Genet.">
        <title>Complete sequencing and characterization of 21,243 full-length human cDNAs.</title>
        <authorList>
            <person name="Ota T."/>
            <person name="Suzuki Y."/>
            <person name="Nishikawa T."/>
            <person name="Otsuki T."/>
            <person name="Sugiyama T."/>
            <person name="Irie R."/>
            <person name="Wakamatsu A."/>
            <person name="Hayashi K."/>
            <person name="Sato H."/>
            <person name="Nagai K."/>
            <person name="Kimura K."/>
            <person name="Makita H."/>
            <person name="Sekine M."/>
            <person name="Obayashi M."/>
            <person name="Nishi T."/>
            <person name="Shibahara T."/>
            <person name="Tanaka T."/>
            <person name="Ishii S."/>
            <person name="Yamamoto J."/>
            <person name="Saito K."/>
            <person name="Kawai Y."/>
            <person name="Isono Y."/>
            <person name="Nakamura Y."/>
            <person name="Nagahari K."/>
            <person name="Murakami K."/>
            <person name="Yasuda T."/>
            <person name="Iwayanagi T."/>
            <person name="Wagatsuma M."/>
            <person name="Shiratori A."/>
            <person name="Sudo H."/>
            <person name="Hosoiri T."/>
            <person name="Kaku Y."/>
            <person name="Kodaira H."/>
            <person name="Kondo H."/>
            <person name="Sugawara M."/>
            <person name="Takahashi M."/>
            <person name="Kanda K."/>
            <person name="Yokoi T."/>
            <person name="Furuya T."/>
            <person name="Kikkawa E."/>
            <person name="Omura Y."/>
            <person name="Abe K."/>
            <person name="Kamihara K."/>
            <person name="Katsuta N."/>
            <person name="Sato K."/>
            <person name="Tanikawa M."/>
            <person name="Yamazaki M."/>
            <person name="Ninomiya K."/>
            <person name="Ishibashi T."/>
            <person name="Yamashita H."/>
            <person name="Murakawa K."/>
            <person name="Fujimori K."/>
            <person name="Tanai H."/>
            <person name="Kimata M."/>
            <person name="Watanabe M."/>
            <person name="Hiraoka S."/>
            <person name="Chiba Y."/>
            <person name="Ishida S."/>
            <person name="Ono Y."/>
            <person name="Takiguchi S."/>
            <person name="Watanabe S."/>
            <person name="Yosida M."/>
            <person name="Hotuta T."/>
            <person name="Kusano J."/>
            <person name="Kanehori K."/>
            <person name="Takahashi-Fujii A."/>
            <person name="Hara H."/>
            <person name="Tanase T.-O."/>
            <person name="Nomura Y."/>
            <person name="Togiya S."/>
            <person name="Komai F."/>
            <person name="Hara R."/>
            <person name="Takeuchi K."/>
            <person name="Arita M."/>
            <person name="Imose N."/>
            <person name="Musashino K."/>
            <person name="Yuuki H."/>
            <person name="Oshima A."/>
            <person name="Sasaki N."/>
            <person name="Aotsuka S."/>
            <person name="Yoshikawa Y."/>
            <person name="Matsunawa H."/>
            <person name="Ichihara T."/>
            <person name="Shiohata N."/>
            <person name="Sano S."/>
            <person name="Moriya S."/>
            <person name="Momiyama H."/>
            <person name="Satoh N."/>
            <person name="Takami S."/>
            <person name="Terashima Y."/>
            <person name="Suzuki O."/>
            <person name="Nakagawa S."/>
            <person name="Senoh A."/>
            <person name="Mizoguchi H."/>
            <person name="Goto Y."/>
            <person name="Shimizu F."/>
            <person name="Wakebe H."/>
            <person name="Hishigaki H."/>
            <person name="Watanabe T."/>
            <person name="Sugiyama A."/>
            <person name="Takemoto M."/>
            <person name="Kawakami B."/>
            <person name="Yamazaki M."/>
            <person name="Watanabe K."/>
            <person name="Kumagai A."/>
            <person name="Itakura S."/>
            <person name="Fukuzumi Y."/>
            <person name="Fujimori Y."/>
            <person name="Komiyama M."/>
            <person name="Tashiro H."/>
            <person name="Tanigami A."/>
            <person name="Fujiwara T."/>
            <person name="Ono T."/>
            <person name="Yamada K."/>
            <person name="Fujii Y."/>
            <person name="Ozaki K."/>
            <person name="Hirao M."/>
            <person name="Ohmori Y."/>
            <person name="Kawabata A."/>
            <person name="Hikiji T."/>
            <person name="Kobatake N."/>
            <person name="Inagaki H."/>
            <person name="Ikema Y."/>
            <person name="Okamoto S."/>
            <person name="Okitani R."/>
            <person name="Kawakami T."/>
            <person name="Noguchi S."/>
            <person name="Itoh T."/>
            <person name="Shigeta K."/>
            <person name="Senba T."/>
            <person name="Matsumura K."/>
            <person name="Nakajima Y."/>
            <person name="Mizuno T."/>
            <person name="Morinaga M."/>
            <person name="Sasaki M."/>
            <person name="Togashi T."/>
            <person name="Oyama M."/>
            <person name="Hata H."/>
            <person name="Watanabe M."/>
            <person name="Komatsu T."/>
            <person name="Mizushima-Sugano J."/>
            <person name="Satoh T."/>
            <person name="Shirai Y."/>
            <person name="Takahashi Y."/>
            <person name="Nakagawa K."/>
            <person name="Okumura K."/>
            <person name="Nagase T."/>
            <person name="Nomura N."/>
            <person name="Kikuchi H."/>
            <person name="Masuho Y."/>
            <person name="Yamashita R."/>
            <person name="Nakai K."/>
            <person name="Yada T."/>
            <person name="Nakamura Y."/>
            <person name="Ohara O."/>
            <person name="Isogai T."/>
            <person name="Sugano S."/>
        </authorList>
    </citation>
    <scope>NUCLEOTIDE SEQUENCE [LARGE SCALE MRNA] (ISOFORM GLYCOPHORIN-C)</scope>
</reference>
<reference key="7">
    <citation type="submission" date="2004-11" db="EMBL/GenBank/DDBJ databases">
        <authorList>
            <consortium name="SeattleSNPs variation discovery resource"/>
        </authorList>
    </citation>
    <scope>NUCLEOTIDE SEQUENCE [GENOMIC DNA]</scope>
    <scope>VARIANT GLU-124</scope>
</reference>
<reference key="8">
    <citation type="journal article" date="2005" name="Nature">
        <title>Generation and annotation of the DNA sequences of human chromosomes 2 and 4.</title>
        <authorList>
            <person name="Hillier L.W."/>
            <person name="Graves T.A."/>
            <person name="Fulton R.S."/>
            <person name="Fulton L.A."/>
            <person name="Pepin K.H."/>
            <person name="Minx P."/>
            <person name="Wagner-McPherson C."/>
            <person name="Layman D."/>
            <person name="Wylie K."/>
            <person name="Sekhon M."/>
            <person name="Becker M.C."/>
            <person name="Fewell G.A."/>
            <person name="Delehaunty K.D."/>
            <person name="Miner T.L."/>
            <person name="Nash W.E."/>
            <person name="Kremitzki C."/>
            <person name="Oddy L."/>
            <person name="Du H."/>
            <person name="Sun H."/>
            <person name="Bradshaw-Cordum H."/>
            <person name="Ali J."/>
            <person name="Carter J."/>
            <person name="Cordes M."/>
            <person name="Harris A."/>
            <person name="Isak A."/>
            <person name="van Brunt A."/>
            <person name="Nguyen C."/>
            <person name="Du F."/>
            <person name="Courtney L."/>
            <person name="Kalicki J."/>
            <person name="Ozersky P."/>
            <person name="Abbott S."/>
            <person name="Armstrong J."/>
            <person name="Belter E.A."/>
            <person name="Caruso L."/>
            <person name="Cedroni M."/>
            <person name="Cotton M."/>
            <person name="Davidson T."/>
            <person name="Desai A."/>
            <person name="Elliott G."/>
            <person name="Erb T."/>
            <person name="Fronick C."/>
            <person name="Gaige T."/>
            <person name="Haakenson W."/>
            <person name="Haglund K."/>
            <person name="Holmes A."/>
            <person name="Harkins R."/>
            <person name="Kim K."/>
            <person name="Kruchowski S.S."/>
            <person name="Strong C.M."/>
            <person name="Grewal N."/>
            <person name="Goyea E."/>
            <person name="Hou S."/>
            <person name="Levy A."/>
            <person name="Martinka S."/>
            <person name="Mead K."/>
            <person name="McLellan M.D."/>
            <person name="Meyer R."/>
            <person name="Randall-Maher J."/>
            <person name="Tomlinson C."/>
            <person name="Dauphin-Kohlberg S."/>
            <person name="Kozlowicz-Reilly A."/>
            <person name="Shah N."/>
            <person name="Swearengen-Shahid S."/>
            <person name="Snider J."/>
            <person name="Strong J.T."/>
            <person name="Thompson J."/>
            <person name="Yoakum M."/>
            <person name="Leonard S."/>
            <person name="Pearman C."/>
            <person name="Trani L."/>
            <person name="Radionenko M."/>
            <person name="Waligorski J.E."/>
            <person name="Wang C."/>
            <person name="Rock S.M."/>
            <person name="Tin-Wollam A.-M."/>
            <person name="Maupin R."/>
            <person name="Latreille P."/>
            <person name="Wendl M.C."/>
            <person name="Yang S.-P."/>
            <person name="Pohl C."/>
            <person name="Wallis J.W."/>
            <person name="Spieth J."/>
            <person name="Bieri T.A."/>
            <person name="Berkowicz N."/>
            <person name="Nelson J.O."/>
            <person name="Osborne J."/>
            <person name="Ding L."/>
            <person name="Meyer R."/>
            <person name="Sabo A."/>
            <person name="Shotland Y."/>
            <person name="Sinha P."/>
            <person name="Wohldmann P.E."/>
            <person name="Cook L.L."/>
            <person name="Hickenbotham M.T."/>
            <person name="Eldred J."/>
            <person name="Williams D."/>
            <person name="Jones T.A."/>
            <person name="She X."/>
            <person name="Ciccarelli F.D."/>
            <person name="Izaurralde E."/>
            <person name="Taylor J."/>
            <person name="Schmutz J."/>
            <person name="Myers R.M."/>
            <person name="Cox D.R."/>
            <person name="Huang X."/>
            <person name="McPherson J.D."/>
            <person name="Mardis E.R."/>
            <person name="Clifton S.W."/>
            <person name="Warren W.C."/>
            <person name="Chinwalla A.T."/>
            <person name="Eddy S.R."/>
            <person name="Marra M.A."/>
            <person name="Ovcharenko I."/>
            <person name="Furey T.S."/>
            <person name="Miller W."/>
            <person name="Eichler E.E."/>
            <person name="Bork P."/>
            <person name="Suyama M."/>
            <person name="Torrents D."/>
            <person name="Waterston R.H."/>
            <person name="Wilson R.K."/>
        </authorList>
    </citation>
    <scope>NUCLEOTIDE SEQUENCE [LARGE SCALE GENOMIC DNA]</scope>
</reference>
<reference key="9">
    <citation type="journal article" date="2004" name="Genome Res.">
        <title>The status, quality, and expansion of the NIH full-length cDNA project: the Mammalian Gene Collection (MGC).</title>
        <authorList>
            <consortium name="The MGC Project Team"/>
        </authorList>
    </citation>
    <scope>NUCLEOTIDE SEQUENCE [LARGE SCALE MRNA] (ISOFORM GLYCOPHORIN-C)</scope>
</reference>
<reference key="10">
    <citation type="journal article" date="1987" name="J. Biol. Chem.">
        <title>Glycophorins B and C from human erythrocyte membranes. Purification and sequence analysis.</title>
        <authorList>
            <person name="Blanchard D."/>
            <person name="Dahr W."/>
            <person name="Hummel M."/>
            <person name="Latron F."/>
            <person name="Beyreuther K."/>
            <person name="Cartron J.-P."/>
        </authorList>
    </citation>
    <scope>PROTEIN SEQUENCE OF 49-88</scope>
</reference>
<reference key="11">
    <citation type="journal article" date="1985" name="Biol. Chem. Hoppe-Seyler">
        <title>Isolation and structural analysis of glycophorin C.</title>
        <authorList>
            <person name="Dahr W."/>
            <person name="Humel M."/>
            <person name="Blanchard D."/>
            <person name="Beyreuther K."/>
            <person name="Cartron J.-P."/>
        </authorList>
    </citation>
    <scope>PROTEIN SEQUENCE OF 1-87</scope>
    <source>
        <tissue>Blood</tissue>
    </source>
</reference>
<reference key="12">
    <citation type="journal article" date="1985" name="Biol. Chem. Hoppe-Seyler">
        <title>A revision of the N-terminal structure of sialoglycoprotein D (glycophorin C) from human erythrocyte membranes.</title>
        <authorList>
            <person name="Dahr W."/>
            <person name="Beyreuther K."/>
        </authorList>
    </citation>
    <scope>PROTEIN SEQUENCE OF 1-48</scope>
    <source>
        <tissue>Blood</tissue>
    </source>
</reference>
<reference key="13">
    <citation type="journal article" date="1982" name="Eur. J. Biochem.">
        <title>N-terminal amino acid sequence of sialoglycoprotein D (glycophorin C) from human erythrocyte membranes.</title>
        <authorList>
            <person name="Dahr W."/>
            <person name="Beyreuther K."/>
            <person name="Kordowicz M."/>
            <person name="Krueger J."/>
        </authorList>
    </citation>
    <scope>PRELIMINARY PROTEIN SEQUENCE OF 1-48</scope>
    <scope>GLYCOSYLATION AT SER-3; THR-4; SER-6; ASN-8; SER-9; THR-10; SER-15; SER-24; SER-26; THR-27; THR-28; THR-31; THR-32; THR-33 AND SER-42</scope>
    <source>
        <tissue>Blood</tissue>
    </source>
</reference>
<reference key="14">
    <citation type="journal article" date="1989" name="Eur. J. Biochem.">
        <title>Structural homology between glycophorins C and D of human erythrocytes.</title>
        <authorList>
            <person name="El-Maliki B."/>
            <person name="Blanchard D."/>
            <person name="Dahr W."/>
            <person name="Beyreuther K."/>
            <person name="Cartron J.-P."/>
        </authorList>
    </citation>
    <scope>PROTEIN SEQUENCE OF 30-91</scope>
</reference>
<reference key="15">
    <citation type="journal article" date="1989" name="J. Biol. Chem.">
        <title>Structure of the promoter region and tissue specificity of the human glycophorin C gene.</title>
        <authorList>
            <person name="le van Kim C."/>
            <person name="Colin Y."/>
            <person name="Mitjavila M.T."/>
            <person name="Clerget M."/>
            <person name="Dubart A."/>
            <person name="Nakazawa M."/>
            <person name="Vainchenker W."/>
            <person name="Cartron J.-P."/>
        </authorList>
    </citation>
    <scope>NUCLEOTIDE SEQUENCE [GENOMIC DNA] OF 1-16</scope>
</reference>
<reference key="16">
    <citation type="journal article" date="1989" name="Biochem. J.">
        <title>Rearrangements of the red-cell membrane glycophorin C (sialoglycoprotein beta) gene. A further study of alterations in the glycophorin C gene.</title>
        <authorList>
            <person name="High S."/>
            <person name="Tanner M.J.A."/>
            <person name="Macdonald E.N."/>
            <person name="Anstee D.J."/>
        </authorList>
    </citation>
    <scope>NUCLEOTIDE SEQUENCE [GENOMIC DNA] OF 17-128</scope>
</reference>
<reference key="17">
    <citation type="journal article" date="1989" name="J. Biol. Chem.">
        <title>Human erythrocyte glycophorin C. Gene structure and rearrangement in genetic variants.</title>
        <authorList>
            <person name="Colin Y."/>
            <person name="le van Kim C."/>
            <person name="Tsapis A."/>
            <person name="Clerget M."/>
            <person name="D'Auriol L."/>
            <person name="London J."/>
            <person name="Galibert F."/>
            <person name="Cartron J.-P."/>
        </authorList>
    </citation>
    <scope>GENE STRUCTURE</scope>
</reference>
<reference key="18">
    <citation type="journal article" date="2003" name="Nat. Med.">
        <title>Plasmodium falciparum erythrocyte invasion through glycophorin C and selection for Gerbich negativity in human populations.</title>
        <authorList>
            <person name="Maier A.G."/>
            <person name="Duraisingh M.T."/>
            <person name="Reeder J.C."/>
            <person name="Patel S.S."/>
            <person name="Kazura J.W."/>
            <person name="Zimmerman P.A."/>
            <person name="Cowman A.F."/>
        </authorList>
    </citation>
    <scope>POLYMORPHISM</scope>
    <scope>INVOLVEMENT IN PROTECTION AGAINST MALARIA</scope>
</reference>
<reference key="19">
    <citation type="journal article" date="2009" name="Sci. Signal.">
        <title>Quantitative phosphoproteomic analysis of T cell receptor signaling reveals system-wide modulation of protein-protein interactions.</title>
        <authorList>
            <person name="Mayya V."/>
            <person name="Lundgren D.H."/>
            <person name="Hwang S.-I."/>
            <person name="Rezaul K."/>
            <person name="Wu L."/>
            <person name="Eng J.K."/>
            <person name="Rodionov V."/>
            <person name="Han D.K."/>
        </authorList>
    </citation>
    <scope>PHOSPHORYLATION [LARGE SCALE ANALYSIS] AT SER-104</scope>
    <scope>IDENTIFICATION BY MASS SPECTROMETRY [LARGE SCALE ANALYSIS]</scope>
    <source>
        <tissue>Leukemic T-cell</tissue>
    </source>
</reference>
<reference key="20">
    <citation type="journal article" date="2012" name="Mol. Cell. Proteomics">
        <title>Human urinary glycoproteomics; attachment site specific analysis of N- and O-linked glycosylations by CID and ECD.</title>
        <authorList>
            <person name="Halim A."/>
            <person name="Nilsson J."/>
            <person name="Ruetschi U."/>
            <person name="Hesse C."/>
            <person name="Larson G."/>
        </authorList>
    </citation>
    <scope>GLYCOSYLATION AT SER-42</scope>
    <scope>STRUCTURE OF CARBOHYDRATES</scope>
    <scope>IDENTIFICATION BY MASS SPECTROMETRY</scope>
</reference>
<reference key="21">
    <citation type="journal article" date="1991" name="Blood">
        <title>Molecular characterization of erythrocyte glycophorin C variants.</title>
        <authorList>
            <person name="Chang S."/>
            <person name="Reid M.E."/>
            <person name="Conboy J."/>
            <person name="Kan Y.W."/>
            <person name="Mohandas N."/>
        </authorList>
    </citation>
    <scope>POLYMORPHISM</scope>
    <scope>VARIANT SER-8</scope>
</reference>
<reference key="22">
    <citation type="journal article" date="1992" name="Vox Sang.">
        <title>Point mutation in the glycophorin C gene results in the expression of the blood group antigen Dha.</title>
        <authorList>
            <person name="King M.J."/>
            <person name="Avent N.D."/>
            <person name="Mallinson G."/>
            <person name="Reid M.E."/>
        </authorList>
    </citation>
    <scope>POLYMORPHISM</scope>
    <scope>VARIANT PHE-14</scope>
</reference>
<reference key="23">
    <citation type="journal article" date="1993" name="Blood">
        <title>A point mutation in the GYPC gene results in the expression of the blood group Ana antigen on glycophorin D but not on glycophorin C: further evidence that glycophorin D is a product of the GYPC gene.</title>
        <authorList>
            <person name="Daniels G."/>
            <person name="King M.J."/>
            <person name="Avent N.D."/>
            <person name="Khalid G."/>
            <person name="Reid M.E."/>
            <person name="Mallinson G."/>
            <person name="Symthe J."/>
            <person name="Cedergren B."/>
        </authorList>
    </citation>
    <scope>POLYMORPHISM</scope>
    <scope>VARIANT SER-23</scope>
</reference>
<reference key="24">
    <citation type="journal article" date="2013" name="J. Proteome Res.">
        <title>Toward a comprehensive characterization of a human cancer cell phosphoproteome.</title>
        <authorList>
            <person name="Zhou H."/>
            <person name="Di Palma S."/>
            <person name="Preisinger C."/>
            <person name="Peng M."/>
            <person name="Polat A.N."/>
            <person name="Heck A.J."/>
            <person name="Mohammed S."/>
        </authorList>
    </citation>
    <scope>IDENTIFICATION BY MASS SPECTROMETRY [LARGE SCALE ANALYSIS]</scope>
    <source>
        <tissue>Erythroleukemia</tissue>
    </source>
</reference>
<reference key="25">
    <citation type="journal article" date="2014" name="J. Proteomics">
        <title>An enzyme assisted RP-RPLC approach for in-depth analysis of human liver phosphoproteome.</title>
        <authorList>
            <person name="Bian Y."/>
            <person name="Song C."/>
            <person name="Cheng K."/>
            <person name="Dong M."/>
            <person name="Wang F."/>
            <person name="Huang J."/>
            <person name="Sun D."/>
            <person name="Wang L."/>
            <person name="Ye M."/>
            <person name="Zou H."/>
        </authorList>
    </citation>
    <scope>PHOSPHORYLATION [LARGE SCALE ANALYSIS] AT SER-122</scope>
    <scope>IDENTIFICATION BY MASS SPECTROMETRY [LARGE SCALE ANALYSIS]</scope>
    <source>
        <tissue>Liver</tissue>
    </source>
</reference>
<reference key="26">
    <citation type="journal article" date="2015" name="Proteomics">
        <title>N-terminome analysis of the human mitochondrial proteome.</title>
        <authorList>
            <person name="Vaca Jacome A.S."/>
            <person name="Rabilloud T."/>
            <person name="Schaeffer-Reiss C."/>
            <person name="Rompais M."/>
            <person name="Ayoub D."/>
            <person name="Lane L."/>
            <person name="Bairoch A."/>
            <person name="Van Dorsselaer A."/>
            <person name="Carapito C."/>
        </authorList>
    </citation>
    <scope>IDENTIFICATION BY MASS SPECTROMETRY [LARGE SCALE ANALYSIS]</scope>
</reference>
<accession>P04921</accession>
<accession>B2R522</accession>
<accession>Q53SV9</accession>
<accession>Q92642</accession>
<protein>
    <recommendedName>
        <fullName>Glycophorin-C</fullName>
    </recommendedName>
    <alternativeName>
        <fullName>Glycoconnectin</fullName>
    </alternativeName>
    <alternativeName>
        <fullName>Glycophorin-D</fullName>
        <shortName>GPD</shortName>
    </alternativeName>
    <alternativeName>
        <fullName>Glycoprotein beta</fullName>
    </alternativeName>
    <alternativeName>
        <fullName>PAS-2'</fullName>
    </alternativeName>
    <alternativeName>
        <fullName>Sialoglycoprotein D</fullName>
    </alternativeName>
    <cdAntigenName>CD236</cdAntigenName>
</protein>
<feature type="chain" id="PRO_0000149050" description="Glycophorin-C">
    <location>
        <begin position="1"/>
        <end position="128"/>
    </location>
</feature>
<feature type="topological domain" description="Extracellular">
    <location>
        <begin position="1"/>
        <end position="57"/>
    </location>
</feature>
<feature type="transmembrane region" description="Helical; Signal-anchor for type III membrane protein">
    <location>
        <begin position="58"/>
        <end position="81"/>
    </location>
</feature>
<feature type="topological domain" description="Cytoplasmic">
    <location>
        <begin position="82"/>
        <end position="128"/>
    </location>
</feature>
<feature type="region of interest" description="Disordered" evidence="1">
    <location>
        <begin position="1"/>
        <end position="48"/>
    </location>
</feature>
<feature type="region of interest" description="Disordered" evidence="1">
    <location>
        <begin position="108"/>
        <end position="128"/>
    </location>
</feature>
<feature type="compositionally biased region" description="Polar residues" evidence="1">
    <location>
        <begin position="1"/>
        <end position="12"/>
    </location>
</feature>
<feature type="compositionally biased region" description="Low complexity" evidence="1">
    <location>
        <begin position="22"/>
        <end position="33"/>
    </location>
</feature>
<feature type="site" description="Not glycosylated; in variant Webb antigen">
    <location>
        <position position="8"/>
    </location>
</feature>
<feature type="modified residue" description="Phosphoserine" evidence="14">
    <location>
        <position position="104"/>
    </location>
</feature>
<feature type="modified residue" description="Phosphoserine" evidence="15">
    <location>
        <position position="122"/>
    </location>
</feature>
<feature type="glycosylation site" description="O-linked (GalNAc...) serine" evidence="7 9">
    <location>
        <position position="3"/>
    </location>
</feature>
<feature type="glycosylation site" description="O-linked (GalNAc...) threonine" evidence="7 9">
    <location>
        <position position="4"/>
    </location>
</feature>
<feature type="glycosylation site" description="O-linked (GalNAc...) serine" evidence="7 9">
    <location>
        <position position="6"/>
    </location>
</feature>
<feature type="glycosylation site" description="N-linked (GlcNAc...) asparagine" evidence="9">
    <location>
        <position position="8"/>
    </location>
</feature>
<feature type="glycosylation site" description="O-linked (GalNAc...) serine" evidence="9">
    <location>
        <position position="9"/>
    </location>
</feature>
<feature type="glycosylation site" description="O-linked (GalNAc...) threonine" evidence="9">
    <location>
        <position position="10"/>
    </location>
</feature>
<feature type="glycosylation site" description="O-linked (GalNAc...) serine" evidence="7 9">
    <location>
        <position position="15"/>
    </location>
</feature>
<feature type="glycosylation site" description="O-linked (GalNAc...) serine" evidence="7 9">
    <location>
        <position position="24"/>
    </location>
</feature>
<feature type="glycosylation site" description="O-linked (GalNAc...) serine" evidence="7 9">
    <location>
        <position position="26"/>
    </location>
</feature>
<feature type="glycosylation site" description="O-linked (GalNAc...) threonine" evidence="7 9">
    <location>
        <position position="27"/>
    </location>
</feature>
<feature type="glycosylation site" description="O-linked (GalNAc...) threonine" evidence="7 9">
    <location>
        <position position="28"/>
    </location>
</feature>
<feature type="glycosylation site" description="O-linked (GalNAc...) threonine" evidence="7 9">
    <location>
        <position position="31"/>
    </location>
</feature>
<feature type="glycosylation site" description="O-linked (GalNAc...) threonine" evidence="7 9">
    <location>
        <position position="32"/>
    </location>
</feature>
<feature type="glycosylation site" description="O-linked (GalNAc...) threonine" evidence="7 9">
    <location>
        <position position="33"/>
    </location>
</feature>
<feature type="glycosylation site" description="O-linked (GalNAc...) serine" evidence="5 7 9">
    <location>
        <position position="42"/>
    </location>
</feature>
<feature type="splice variant" id="VSP_001777" description="In isoform Glycophorin-D." evidence="13">
    <location>
        <begin position="1"/>
        <end position="21"/>
    </location>
</feature>
<feature type="splice variant" id="VSP_054790" description="In isoform 3." evidence="12">
    <location>
        <begin position="18"/>
        <end position="36"/>
    </location>
</feature>
<feature type="sequence variant" id="VAR_003193" description="Webb (WB) antigen; dbSNP:rs121912760." evidence="4">
    <original>N</original>
    <variation>S</variation>
    <location>
        <position position="8"/>
    </location>
</feature>
<feature type="sequence variant" id="VAR_003194" description="Duch (DH(a)) antigen; dbSNP:rs121912761." evidence="3">
    <original>L</original>
    <variation>F</variation>
    <location>
        <position position="14"/>
    </location>
</feature>
<feature type="sequence variant" id="VAR_003195" description="Ahonen (AN(a)) antigen; dbSNP:rs774359594." evidence="10">
    <original>A</original>
    <variation>S</variation>
    <location>
        <position position="23"/>
    </location>
</feature>
<feature type="sequence variant" id="VAR_021342" description="In dbSNP:rs28370000." evidence="11">
    <original>K</original>
    <variation>E</variation>
    <location>
        <position position="124"/>
    </location>
</feature>
<evidence type="ECO:0000256" key="1">
    <source>
        <dbReference type="SAM" id="MobiDB-lite"/>
    </source>
</evidence>
<evidence type="ECO:0000269" key="2">
    <source>
    </source>
</evidence>
<evidence type="ECO:0000269" key="3">
    <source>
    </source>
</evidence>
<evidence type="ECO:0000269" key="4">
    <source>
    </source>
</evidence>
<evidence type="ECO:0000269" key="5">
    <source>
    </source>
</evidence>
<evidence type="ECO:0000269" key="6">
    <source>
    </source>
</evidence>
<evidence type="ECO:0000269" key="7">
    <source>
    </source>
</evidence>
<evidence type="ECO:0000269" key="8">
    <source>
    </source>
</evidence>
<evidence type="ECO:0000269" key="9">
    <source>
    </source>
</evidence>
<evidence type="ECO:0000269" key="10">
    <source>
    </source>
</evidence>
<evidence type="ECO:0000269" key="11">
    <source ref="7"/>
</evidence>
<evidence type="ECO:0000303" key="12">
    <source>
    </source>
</evidence>
<evidence type="ECO:0000305" key="13"/>
<evidence type="ECO:0007744" key="14">
    <source>
    </source>
</evidence>
<evidence type="ECO:0007744" key="15">
    <source>
    </source>
</evidence>
<keyword id="KW-0002">3D-structure</keyword>
<keyword id="KW-0025">Alternative splicing</keyword>
<keyword id="KW-0095">Blood group antigen</keyword>
<keyword id="KW-1003">Cell membrane</keyword>
<keyword id="KW-0903">Direct protein sequencing</keyword>
<keyword id="KW-0325">Glycoprotein</keyword>
<keyword id="KW-0472">Membrane</keyword>
<keyword id="KW-0597">Phosphoprotein</keyword>
<keyword id="KW-1267">Proteomics identification</keyword>
<keyword id="KW-1185">Reference proteome</keyword>
<keyword id="KW-0730">Sialic acid</keyword>
<keyword id="KW-0812">Transmembrane</keyword>
<keyword id="KW-1133">Transmembrane helix</keyword>
<gene>
    <name type="primary">GYPC</name>
    <name type="synonym">GLPC</name>
    <name type="synonym">GPC</name>
</gene>
<comment type="function">
    <text>This protein is a minor sialoglycoprotein in human erythrocyte membranes. The blood group Gerbich antigens and receptors for Plasmodium falciparum merozoites are most likely located within the extracellular domain. Glycophorin-C plays an important role in regulating the stability of red cells.</text>
</comment>
<comment type="interaction">
    <interactant intactId="EBI-7797098">
        <id>P04921</id>
    </interactant>
    <interactant intactId="EBI-348517">
        <id>O95870</id>
        <label>ABHD16A</label>
    </interactant>
    <organismsDiffer>false</organismsDiffer>
    <experiments>3</experiments>
</comment>
<comment type="interaction">
    <interactant intactId="EBI-7797098">
        <id>P04921</id>
    </interactant>
    <interactant intactId="EBI-13059134">
        <id>Q13520</id>
        <label>AQP6</label>
    </interactant>
    <organismsDiffer>false</organismsDiffer>
    <experiments>3</experiments>
</comment>
<comment type="interaction">
    <interactant intactId="EBI-7797098">
        <id>P04921</id>
    </interactant>
    <interactant intactId="EBI-18076404">
        <id>O15529</id>
        <label>GPR42</label>
    </interactant>
    <organismsDiffer>false</organismsDiffer>
    <experiments>3</experiments>
</comment>
<comment type="interaction">
    <interactant intactId="EBI-7797098">
        <id>P04921</id>
    </interactant>
    <interactant intactId="EBI-12955265">
        <id>Q96GM1</id>
        <label>PLPPR2</label>
    </interactant>
    <organismsDiffer>false</organismsDiffer>
    <experiments>3</experiments>
</comment>
<comment type="interaction">
    <interactant intactId="EBI-7797098">
        <id>P04921</id>
    </interactant>
    <interactant intactId="EBI-9916444">
        <id>Q8TEB9</id>
        <label>RHBDD1</label>
    </interactant>
    <organismsDiffer>false</organismsDiffer>
    <experiments>3</experiments>
</comment>
<comment type="interaction">
    <interactant intactId="EBI-7797098">
        <id>P04921</id>
    </interactant>
    <interactant intactId="EBI-18037857">
        <id>Q3SXP7</id>
        <label>SHISAL1</label>
    </interactant>
    <organismsDiffer>false</organismsDiffer>
    <experiments>3</experiments>
</comment>
<comment type="interaction">
    <interactant intactId="EBI-7797098">
        <id>P04921</id>
    </interactant>
    <interactant intactId="EBI-18159983">
        <id>Q3KNW5</id>
        <label>SLC10A6</label>
    </interactant>
    <organismsDiffer>false</organismsDiffer>
    <experiments>3</experiments>
</comment>
<comment type="interaction">
    <interactant intactId="EBI-7797098">
        <id>P04921</id>
    </interactant>
    <interactant intactId="EBI-8638294">
        <id>Q9NUH8</id>
        <label>TMEM14B</label>
    </interactant>
    <organismsDiffer>false</organismsDiffer>
    <experiments>3</experiments>
</comment>
<comment type="interaction">
    <interactant intactId="EBI-7797098">
        <id>P04921</id>
    </interactant>
    <interactant intactId="EBI-17198826">
        <id>Q6PEY1</id>
        <label>TMEM88</label>
    </interactant>
    <organismsDiffer>false</organismsDiffer>
    <experiments>3</experiments>
</comment>
<comment type="interaction">
    <interactant intactId="EBI-7797098">
        <id>P04921</id>
    </interactant>
    <interactant intactId="EBI-7361096">
        <id>O95858</id>
        <label>TSPAN15</label>
    </interactant>
    <organismsDiffer>false</organismsDiffer>
    <experiments>3</experiments>
</comment>
<comment type="subcellular location">
    <subcellularLocation>
        <location>Cell membrane</location>
        <topology>Single-pass type III membrane protein</topology>
    </subcellularLocation>
    <text>Linked to the membrane via band 4.1.</text>
</comment>
<comment type="alternative products">
    <event type="alternative splicing"/>
    <isoform>
        <id>P04921-1</id>
        <name>Glycophorin-C</name>
        <sequence type="displayed"/>
    </isoform>
    <isoform>
        <id>P04921-2</id>
        <name>Glycophorin-D</name>
        <sequence type="described" ref="VSP_001777"/>
    </isoform>
    <isoform>
        <id>P04921-3</id>
        <name>3</name>
        <name>IsoGPC</name>
        <sequence type="described" ref="VSP_054790"/>
    </isoform>
</comment>
<comment type="tissue specificity">
    <text evidence="6">Glycophorin-C is expressed in erythrocytes. Glycophorin-D and IsoGPC are ubiquitously expressed.</text>
</comment>
<comment type="PTM">
    <text evidence="5 9">O-glycosylated with core 1 or possibly core 8 glycans.</text>
</comment>
<comment type="polymorphism">
    <text evidence="8">GYPC is responsible for the Gerbich blood group system (Ge) [MIM:616089]. Ge negative individuals carry a deletion of GYPC exon 3.</text>
</comment>
<comment type="polymorphism">
    <text evidence="2">Deletion of exon 3 in GYPC results in resistance to Plasmodium falciparum invasion and protection against severe malaria [MIM:611162].</text>
</comment>
<comment type="similarity">
    <text evidence="13">Belongs to the glycophorin-C family.</text>
</comment>
<comment type="sequence caution" evidence="13">
    <conflict type="frameshift">
        <sequence resource="EMBL-CDS" id="CAA32093"/>
    </conflict>
</comment>
<comment type="online information" name="Wikipedia">
    <link uri="https://en.wikipedia.org/wiki/Glycophorin_C"/>
    <text>Glycophorin C entry</text>
</comment>
<organism>
    <name type="scientific">Homo sapiens</name>
    <name type="common">Human</name>
    <dbReference type="NCBI Taxonomy" id="9606"/>
    <lineage>
        <taxon>Eukaryota</taxon>
        <taxon>Metazoa</taxon>
        <taxon>Chordata</taxon>
        <taxon>Craniata</taxon>
        <taxon>Vertebrata</taxon>
        <taxon>Euteleostomi</taxon>
        <taxon>Mammalia</taxon>
        <taxon>Eutheria</taxon>
        <taxon>Euarchontoglires</taxon>
        <taxon>Primates</taxon>
        <taxon>Haplorrhini</taxon>
        <taxon>Catarrhini</taxon>
        <taxon>Hominidae</taxon>
        <taxon>Homo</taxon>
    </lineage>
</organism>
<name>GLPC_HUMAN</name>